<organism>
    <name type="scientific">Pseudomonas syringae pv. tomato (strain ATCC BAA-871 / DC3000)</name>
    <dbReference type="NCBI Taxonomy" id="223283"/>
    <lineage>
        <taxon>Bacteria</taxon>
        <taxon>Pseudomonadati</taxon>
        <taxon>Pseudomonadota</taxon>
        <taxon>Gammaproteobacteria</taxon>
        <taxon>Pseudomonadales</taxon>
        <taxon>Pseudomonadaceae</taxon>
        <taxon>Pseudomonas</taxon>
    </lineage>
</organism>
<protein>
    <recommendedName>
        <fullName>Glycosyltransferase alg8</fullName>
        <ecNumber>2.4.-.-</ecNumber>
    </recommendedName>
</protein>
<keyword id="KW-0016">Alginate biosynthesis</keyword>
<keyword id="KW-1003">Cell membrane</keyword>
<keyword id="KW-0328">Glycosyltransferase</keyword>
<keyword id="KW-0472">Membrane</keyword>
<keyword id="KW-1185">Reference proteome</keyword>
<keyword id="KW-0808">Transferase</keyword>
<keyword id="KW-0812">Transmembrane</keyword>
<keyword id="KW-1133">Transmembrane helix</keyword>
<proteinExistence type="inferred from homology"/>
<comment type="function">
    <text evidence="1">Possibly a processive enzyme that polymerizes GDP-mannuronic acid.</text>
</comment>
<comment type="pathway">
    <text>Glycan biosynthesis; alginate biosynthesis.</text>
</comment>
<comment type="subcellular location">
    <subcellularLocation>
        <location evidence="3">Cell membrane</location>
        <topology evidence="3">Multi-pass membrane protein</topology>
    </subcellularLocation>
</comment>
<comment type="similarity">
    <text evidence="3">Belongs to the glycosyltransferase 2 family.</text>
</comment>
<evidence type="ECO:0000250" key="1"/>
<evidence type="ECO:0000255" key="2"/>
<evidence type="ECO:0000305" key="3"/>
<dbReference type="EC" id="2.4.-.-"/>
<dbReference type="EMBL" id="AE016853">
    <property type="protein sequence ID" value="AAO54767.1"/>
    <property type="molecule type" value="Genomic_DNA"/>
</dbReference>
<dbReference type="RefSeq" id="NP_791072.1">
    <property type="nucleotide sequence ID" value="NC_004578.1"/>
</dbReference>
<dbReference type="STRING" id="223283.PSPTO_1242"/>
<dbReference type="CAZy" id="GT2">
    <property type="family name" value="Glycosyltransferase Family 2"/>
</dbReference>
<dbReference type="KEGG" id="pst:PSPTO_1242"/>
<dbReference type="PATRIC" id="fig|223283.9.peg.1263"/>
<dbReference type="eggNOG" id="COG1215">
    <property type="taxonomic scope" value="Bacteria"/>
</dbReference>
<dbReference type="HOGENOM" id="CLU_024914_0_0_6"/>
<dbReference type="OrthoDB" id="6964257at2"/>
<dbReference type="PhylomeDB" id="Q887P9"/>
<dbReference type="UniPathway" id="UPA00286"/>
<dbReference type="Proteomes" id="UP000002515">
    <property type="component" value="Chromosome"/>
</dbReference>
<dbReference type="GO" id="GO:0005886">
    <property type="term" value="C:plasma membrane"/>
    <property type="evidence" value="ECO:0007669"/>
    <property type="project" value="UniProtKB-SubCell"/>
</dbReference>
<dbReference type="GO" id="GO:0050501">
    <property type="term" value="F:hyaluronan synthase activity"/>
    <property type="evidence" value="ECO:0007669"/>
    <property type="project" value="TreeGrafter"/>
</dbReference>
<dbReference type="GO" id="GO:0042121">
    <property type="term" value="P:alginic acid biosynthetic process"/>
    <property type="evidence" value="ECO:0007669"/>
    <property type="project" value="UniProtKB-UniPathway"/>
</dbReference>
<dbReference type="GO" id="GO:0085029">
    <property type="term" value="P:extracellular matrix assembly"/>
    <property type="evidence" value="ECO:0007669"/>
    <property type="project" value="TreeGrafter"/>
</dbReference>
<dbReference type="GO" id="GO:0030213">
    <property type="term" value="P:hyaluronan biosynthetic process"/>
    <property type="evidence" value="ECO:0007669"/>
    <property type="project" value="TreeGrafter"/>
</dbReference>
<dbReference type="InterPro" id="IPR029044">
    <property type="entry name" value="Nucleotide-diphossugar_trans"/>
</dbReference>
<dbReference type="PANTHER" id="PTHR22913">
    <property type="entry name" value="HYALURONAN SYNTHASE"/>
    <property type="match status" value="1"/>
</dbReference>
<dbReference type="PANTHER" id="PTHR22913:SF12">
    <property type="entry name" value="MANNURONAN SYNTHASE"/>
    <property type="match status" value="1"/>
</dbReference>
<dbReference type="Pfam" id="PF13641">
    <property type="entry name" value="Glyco_tranf_2_3"/>
    <property type="match status" value="1"/>
</dbReference>
<dbReference type="SUPFAM" id="SSF53448">
    <property type="entry name" value="Nucleotide-diphospho-sugar transferases"/>
    <property type="match status" value="1"/>
</dbReference>
<name>ALG8_PSESM</name>
<gene>
    <name type="primary">alg8</name>
    <name type="ordered locus">PSPTO_1242</name>
</gene>
<accession>Q887P9</accession>
<sequence length="493" mass="55977">MQRLKHGLLQAAGWLFYLSLLMGLAAALPTSIFDSQSKNFIFLIGAVGIWRYSMGITHFVRGMIFLYIVYPHLRRKVRKLGSAADPSHVFLMVTSFRIDALTTAQVYSSVIREAIECGLPTTVVCSLVEMSDELLVKSMWAKANPPDRVKLDFVRIPGTGKRDGLAYGFRAISRHMPDDRAVVAVIDGDTVLNEGVVAKTVPWFQLFDNVGGLTTNEFCEVRGGYIMSEWHKLRFAQRHINMCSMALSKRVLTMTGRMSVFRAKVVTDPEFIADVESDSLNHWRLGTFRFLTGDDKSSWFSLMRLGYDTFYVPDAAINTVEHPPEKSFLKASRKLMYRWYGNNLRQNSRALGLGVRRLGIFTSIVLFDQRVSMWTSILGLTVAIIASFKYGGAFLLMYLLWIGMTRLILTLLLSLSGHRIGPAYPMILYYNQIVGALMKIYVFFRLDRQSWTRQDTKLSRDMASFQGWFNTWSSRTMTFSAGTIFVAVLLTMV</sequence>
<feature type="chain" id="PRO_0000059256" description="Glycosyltransferase alg8">
    <location>
        <begin position="1"/>
        <end position="493"/>
    </location>
</feature>
<feature type="transmembrane region" description="Helical" evidence="2">
    <location>
        <begin position="13"/>
        <end position="32"/>
    </location>
</feature>
<feature type="transmembrane region" description="Helical" evidence="2">
    <location>
        <begin position="47"/>
        <end position="69"/>
    </location>
</feature>
<feature type="transmembrane region" description="Helical" evidence="2">
    <location>
        <begin position="380"/>
        <end position="402"/>
    </location>
</feature>
<feature type="transmembrane region" description="Helical" evidence="2">
    <location>
        <begin position="422"/>
        <end position="444"/>
    </location>
</feature>
<reference key="1">
    <citation type="journal article" date="2003" name="Proc. Natl. Acad. Sci. U.S.A.">
        <title>The complete genome sequence of the Arabidopsis and tomato pathogen Pseudomonas syringae pv. tomato DC3000.</title>
        <authorList>
            <person name="Buell C.R."/>
            <person name="Joardar V."/>
            <person name="Lindeberg M."/>
            <person name="Selengut J."/>
            <person name="Paulsen I.T."/>
            <person name="Gwinn M.L."/>
            <person name="Dodson R.J."/>
            <person name="DeBoy R.T."/>
            <person name="Durkin A.S."/>
            <person name="Kolonay J.F."/>
            <person name="Madupu R."/>
            <person name="Daugherty S.C."/>
            <person name="Brinkac L.M."/>
            <person name="Beanan M.J."/>
            <person name="Haft D.H."/>
            <person name="Nelson W.C."/>
            <person name="Davidsen T.M."/>
            <person name="Zafar N."/>
            <person name="Zhou L."/>
            <person name="Liu J."/>
            <person name="Yuan Q."/>
            <person name="Khouri H.M."/>
            <person name="Fedorova N.B."/>
            <person name="Tran B."/>
            <person name="Russell D."/>
            <person name="Berry K.J."/>
            <person name="Utterback T.R."/>
            <person name="Van Aken S.E."/>
            <person name="Feldblyum T.V."/>
            <person name="D'Ascenzo M."/>
            <person name="Deng W.-L."/>
            <person name="Ramos A.R."/>
            <person name="Alfano J.R."/>
            <person name="Cartinhour S."/>
            <person name="Chatterjee A.K."/>
            <person name="Delaney T.P."/>
            <person name="Lazarowitz S.G."/>
            <person name="Martin G.B."/>
            <person name="Schneider D.J."/>
            <person name="Tang X."/>
            <person name="Bender C.L."/>
            <person name="White O."/>
            <person name="Fraser C.M."/>
            <person name="Collmer A."/>
        </authorList>
    </citation>
    <scope>NUCLEOTIDE SEQUENCE [LARGE SCALE GENOMIC DNA]</scope>
    <source>
        <strain>ATCC BAA-871 / DC3000</strain>
    </source>
</reference>